<comment type="subcellular location">
    <subcellularLocation>
        <location evidence="2">Membrane</location>
        <topology evidence="2">Single-pass membrane protein</topology>
    </subcellularLocation>
</comment>
<comment type="miscellaneous">
    <text evidence="2">Completely overlaps YKR075C.</text>
</comment>
<comment type="caution">
    <text evidence="3">Product of a dubious gene prediction unlikely to encode a functional protein. Because of that it is not part of the S.cerevisiae S288c complete/reference proteome set.</text>
</comment>
<protein>
    <recommendedName>
        <fullName>Putative uncharacterized protein YKR075W-A</fullName>
    </recommendedName>
</protein>
<name>YK075_YEAST</name>
<feature type="chain" id="PRO_0000299767" description="Putative uncharacterized protein YKR075W-A">
    <location>
        <begin position="1"/>
        <end position="89"/>
    </location>
</feature>
<feature type="transmembrane region" description="Helical" evidence="1">
    <location>
        <begin position="39"/>
        <end position="61"/>
    </location>
</feature>
<gene>
    <name type="ordered locus">YKR075W-A</name>
</gene>
<reference key="1">
    <citation type="journal article" date="1994" name="Nature">
        <title>Complete DNA sequence of yeast chromosome XI.</title>
        <authorList>
            <person name="Dujon B."/>
            <person name="Alexandraki D."/>
            <person name="Andre B."/>
            <person name="Ansorge W."/>
            <person name="Baladron V."/>
            <person name="Ballesta J.P.G."/>
            <person name="Banrevi A."/>
            <person name="Bolle P.-A."/>
            <person name="Bolotin-Fukuhara M."/>
            <person name="Bossier P."/>
            <person name="Bou G."/>
            <person name="Boyer J."/>
            <person name="Buitrago M.J."/>
            <person name="Cheret G."/>
            <person name="Colleaux L."/>
            <person name="Daignan-Fornier B."/>
            <person name="del Rey F."/>
            <person name="Dion C."/>
            <person name="Domdey H."/>
            <person name="Duesterhoeft A."/>
            <person name="Duesterhus S."/>
            <person name="Entian K.-D."/>
            <person name="Erfle H."/>
            <person name="Esteban P.F."/>
            <person name="Feldmann H."/>
            <person name="Fernandes L."/>
            <person name="Fobo G.M."/>
            <person name="Fritz C."/>
            <person name="Fukuhara H."/>
            <person name="Gabel C."/>
            <person name="Gaillon L."/>
            <person name="Garcia-Cantalejo J.M."/>
            <person name="Garcia-Ramirez J.J."/>
            <person name="Gent M.E."/>
            <person name="Ghazvini M."/>
            <person name="Goffeau A."/>
            <person name="Gonzalez A."/>
            <person name="Grothues D."/>
            <person name="Guerreiro P."/>
            <person name="Hegemann J.H."/>
            <person name="Hewitt N."/>
            <person name="Hilger F."/>
            <person name="Hollenberg C.P."/>
            <person name="Horaitis O."/>
            <person name="Indge K.J."/>
            <person name="Jacquier A."/>
            <person name="James C.M."/>
            <person name="Jauniaux J.-C."/>
            <person name="Jimenez A."/>
            <person name="Keuchel H."/>
            <person name="Kirchrath L."/>
            <person name="Kleine K."/>
            <person name="Koetter P."/>
            <person name="Legrain P."/>
            <person name="Liebl S."/>
            <person name="Louis E.J."/>
            <person name="Maia e Silva A."/>
            <person name="Marck C."/>
            <person name="Monnier A.-L."/>
            <person name="Moestl D."/>
            <person name="Mueller S."/>
            <person name="Obermaier B."/>
            <person name="Oliver S.G."/>
            <person name="Pallier C."/>
            <person name="Pascolo S."/>
            <person name="Pfeiffer F."/>
            <person name="Philippsen P."/>
            <person name="Planta R.J."/>
            <person name="Pohl F.M."/>
            <person name="Pohl T.M."/>
            <person name="Poehlmann R."/>
            <person name="Portetelle D."/>
            <person name="Purnelle B."/>
            <person name="Puzos V."/>
            <person name="Ramezani Rad M."/>
            <person name="Rasmussen S.W."/>
            <person name="Remacha M.A."/>
            <person name="Revuelta J.L."/>
            <person name="Richard G.-F."/>
            <person name="Rieger M."/>
            <person name="Rodrigues-Pousada C."/>
            <person name="Rose M."/>
            <person name="Rupp T."/>
            <person name="Santos M.A."/>
            <person name="Schwager C."/>
            <person name="Sensen C."/>
            <person name="Skala J."/>
            <person name="Soares H."/>
            <person name="Sor F."/>
            <person name="Stegemann J."/>
            <person name="Tettelin H."/>
            <person name="Thierry A."/>
            <person name="Tzermia M."/>
            <person name="Urrestarazu L.A."/>
            <person name="van Dyck L."/>
            <person name="van Vliet-Reedijk J.C."/>
            <person name="Valens M."/>
            <person name="Vandenbol M."/>
            <person name="Vilela C."/>
            <person name="Vissers S."/>
            <person name="von Wettstein D."/>
            <person name="Voss H."/>
            <person name="Wiemann S."/>
            <person name="Xu G."/>
            <person name="Zimmermann J."/>
            <person name="Haasemann M."/>
            <person name="Becker I."/>
            <person name="Mewes H.-W."/>
        </authorList>
    </citation>
    <scope>NUCLEOTIDE SEQUENCE [LARGE SCALE GENOMIC DNA]</scope>
    <source>
        <strain>ATCC 204508 / S288c</strain>
    </source>
</reference>
<reference key="2">
    <citation type="journal article" date="2014" name="G3 (Bethesda)">
        <title>The reference genome sequence of Saccharomyces cerevisiae: Then and now.</title>
        <authorList>
            <person name="Engel S.R."/>
            <person name="Dietrich F.S."/>
            <person name="Fisk D.G."/>
            <person name="Binkley G."/>
            <person name="Balakrishnan R."/>
            <person name="Costanzo M.C."/>
            <person name="Dwight S.S."/>
            <person name="Hitz B.C."/>
            <person name="Karra K."/>
            <person name="Nash R.S."/>
            <person name="Weng S."/>
            <person name="Wong E.D."/>
            <person name="Lloyd P."/>
            <person name="Skrzypek M.S."/>
            <person name="Miyasato S.R."/>
            <person name="Simison M."/>
            <person name="Cherry J.M."/>
        </authorList>
    </citation>
    <scope>GENOME REANNOTATION</scope>
    <source>
        <strain>ATCC 204508 / S288c</strain>
    </source>
</reference>
<reference key="3">
    <citation type="journal article" date="2002" name="Nat. Biotechnol.">
        <title>An integrated approach for finding overlooked genes in yeast.</title>
        <authorList>
            <person name="Kumar A."/>
            <person name="Harrison P.M."/>
            <person name="Cheung K.-H."/>
            <person name="Lan N."/>
            <person name="Echols N."/>
            <person name="Bertone P."/>
            <person name="Miller P."/>
            <person name="Gerstein M.B."/>
            <person name="Snyder M."/>
        </authorList>
    </citation>
    <scope>NUCLEOTIDE SEQUENCE [GENOMIC DNA]</scope>
</reference>
<proteinExistence type="uncertain"/>
<keyword id="KW-0472">Membrane</keyword>
<keyword id="KW-0812">Transmembrane</keyword>
<keyword id="KW-1133">Transmembrane helix</keyword>
<dbReference type="EMBL" id="Z28300">
    <property type="status" value="NOT_ANNOTATED_CDS"/>
    <property type="molecule type" value="Genomic_DNA"/>
</dbReference>
<dbReference type="EMBL" id="AF479961">
    <property type="protein sequence ID" value="AAL79274.1"/>
    <property type="molecule type" value="Genomic_DNA"/>
</dbReference>
<dbReference type="PaxDb" id="4932-YKR075W-A"/>
<dbReference type="EnsemblFungi" id="YKR075W-A_mRNA">
    <property type="protein sequence ID" value="YKR075W-A"/>
    <property type="gene ID" value="YKR075W-A"/>
</dbReference>
<dbReference type="AGR" id="SGD:S000028669"/>
<dbReference type="SGD" id="S000028669">
    <property type="gene designation" value="YKR075W-A"/>
</dbReference>
<dbReference type="HOGENOM" id="CLU_2456503_0_0_1"/>
<dbReference type="GO" id="GO:0016020">
    <property type="term" value="C:membrane"/>
    <property type="evidence" value="ECO:0007669"/>
    <property type="project" value="UniProtKB-SubCell"/>
</dbReference>
<sequence length="89" mass="10073">MSSNFTKALSLLSIEALISSTSSVTQHSVFFFKADFRFFVCFWSIWFWTGDISFSLLSMLVKSGPYNTVTSVSLFQLMDSGLDLEFCKP</sequence>
<accession>Q8TGM9</accession>
<evidence type="ECO:0000255" key="1"/>
<evidence type="ECO:0000305" key="2"/>
<evidence type="ECO:0000305" key="3">
    <source>
    </source>
</evidence>
<organism>
    <name type="scientific">Saccharomyces cerevisiae (strain ATCC 204508 / S288c)</name>
    <name type="common">Baker's yeast</name>
    <dbReference type="NCBI Taxonomy" id="559292"/>
    <lineage>
        <taxon>Eukaryota</taxon>
        <taxon>Fungi</taxon>
        <taxon>Dikarya</taxon>
        <taxon>Ascomycota</taxon>
        <taxon>Saccharomycotina</taxon>
        <taxon>Saccharomycetes</taxon>
        <taxon>Saccharomycetales</taxon>
        <taxon>Saccharomycetaceae</taxon>
        <taxon>Saccharomyces</taxon>
    </lineage>
</organism>